<evidence type="ECO:0000250" key="1"/>
<evidence type="ECO:0000250" key="2">
    <source>
        <dbReference type="UniProtKB" id="P04517"/>
    </source>
</evidence>
<evidence type="ECO:0000255" key="3">
    <source>
        <dbReference type="PROSITE-ProRule" id="PRU00539"/>
    </source>
</evidence>
<evidence type="ECO:0000256" key="4">
    <source>
        <dbReference type="SAM" id="MobiDB-lite"/>
    </source>
</evidence>
<evidence type="ECO:0000305" key="5"/>
<sequence>LVRKRCERLYEGRMGVWNGSLKAELRPAEIVLAKKTRSFTAAPLDTLLGAKVCVDDFNNWFYSKNMECPWTVGMTKFYKGWDEFLRKFPDGWVYCDADGSQFDSSLTPYLLNAVLSIRLWAMEDWDIGEQMLKNLYGEITYTPILTPDGTIVKKFKGNNSGQPSTVVDNTLMVLITMYYALRKAGYDTKTQEDMCVFYINGDDLCIAIHPDHEHVLDSFSSSFAELGLKYDFAQRHRNKQNLWFMSHRGILIDDIYIPKLEPERIVAILEWDKSKLPEHRLEAITAAMIESWGHGDLTHQIRRFYQWVLEQAPFNELAKQGRAPYVSEVGLRRLYTSERGSMDELEAYIDKYFERERGDSPELLVYHESRSTDDYQLVCSNNTHVFHQSKNEAVDAGLNEKLKEKENQKEKEKEKQKEKEKDGASDGNDVSTSTKTGERDRDVNVGTSGTFTVPRIKSFTDKMVLPRIKGKTVLNLNHLLQYNPQQIDISNTRATHSQFEKWYEGVRNDYGLNDNEMQVMLNGLMVWCIENGTSPDISGVWVMMDGETQVDYPIKPLIEHATPSFRQIMAHFSNAAEAYIAKRNATERYMPRYGIKRNLTDISLARYAFDFYEVNSKTPDRAREAHMQMKAAALRNTSRKMFGMDGSVSNKEENTERHTVEDVNRDMHSLLGMRN</sequence>
<comment type="function">
    <molecule>Nuclear inclusion protein B</molecule>
    <text>An RNA-dependent RNA polymerase that plays an essential role in the virus replication.</text>
</comment>
<comment type="function">
    <molecule>Capsid protein</molecule>
    <text evidence="2">Involved in aphid transmission, cell-to-cell and systemis movement, encapsidation of the viral RNA and in the regulation of viral RNA amplification.</text>
</comment>
<comment type="catalytic activity">
    <reaction evidence="3">
        <text>RNA(n) + a ribonucleoside 5'-triphosphate = RNA(n+1) + diphosphate</text>
        <dbReference type="Rhea" id="RHEA:21248"/>
        <dbReference type="Rhea" id="RHEA-COMP:14527"/>
        <dbReference type="Rhea" id="RHEA-COMP:17342"/>
        <dbReference type="ChEBI" id="CHEBI:33019"/>
        <dbReference type="ChEBI" id="CHEBI:61557"/>
        <dbReference type="ChEBI" id="CHEBI:140395"/>
        <dbReference type="EC" id="2.7.7.48"/>
    </reaction>
</comment>
<comment type="subcellular location">
    <molecule>Capsid protein</molecule>
    <subcellularLocation>
        <location evidence="5">Virion</location>
    </subcellularLocation>
</comment>
<comment type="PTM">
    <text evidence="1">Genome polyprotein of potyviruses undergoes post-translational proteolytic processing by the main proteinase NIa-pro resulting in the production of at least ten individual proteins. The P1 proteinase and the HC-pro cleave only their respective C-termini autocatalytically. 6K1 is essential for proper proteolytic separation of P3 from CI (By similarity).</text>
</comment>
<comment type="similarity">
    <text evidence="5">Belongs to the potyviridae genome polyprotein family.</text>
</comment>
<organism>
    <name type="scientific">Papaya ringspot virus (strain P / mutant HA 5-1)</name>
    <dbReference type="NCBI Taxonomy" id="31730"/>
    <lineage>
        <taxon>Viruses</taxon>
        <taxon>Riboviria</taxon>
        <taxon>Orthornavirae</taxon>
        <taxon>Pisuviricota</taxon>
        <taxon>Stelpaviricetes</taxon>
        <taxon>Patatavirales</taxon>
        <taxon>Potyviridae</taxon>
        <taxon>Potyvirus</taxon>
        <taxon>Potyvirus papayanuli</taxon>
        <taxon>Papaya ringspot virus</taxon>
    </lineage>
</organism>
<feature type="chain" id="PRO_0000040371" description="Nuclear inclusion protein B" evidence="1">
    <location>
        <begin position="1" status="less than"/>
        <end position="388"/>
    </location>
</feature>
<feature type="chain" id="PRO_0000420011" description="Genome polyprotein">
    <location>
        <begin position="1"/>
        <end position="675"/>
    </location>
</feature>
<feature type="chain" id="PRO_0000040372" description="Capsid protein" evidence="1">
    <location>
        <begin position="389"/>
        <end position="675"/>
    </location>
</feature>
<feature type="domain" description="RdRp catalytic" evidence="3">
    <location>
        <begin position="92"/>
        <end position="216"/>
    </location>
</feature>
<feature type="region of interest" description="Disordered" evidence="4">
    <location>
        <begin position="397"/>
        <end position="447"/>
    </location>
</feature>
<feature type="compositionally biased region" description="Basic and acidic residues" evidence="4">
    <location>
        <begin position="397"/>
        <end position="424"/>
    </location>
</feature>
<feature type="site" description="Cleavage; by NIa-pro" evidence="1">
    <location>
        <begin position="388"/>
        <end position="389"/>
    </location>
</feature>
<feature type="non-terminal residue">
    <location>
        <position position="1"/>
    </location>
</feature>
<dbReference type="EC" id="2.7.7.48"/>
<dbReference type="EMBL" id="D00595">
    <property type="protein sequence ID" value="BAA00471.1"/>
    <property type="molecule type" value="Genomic_RNA"/>
</dbReference>
<dbReference type="PIR" id="JQ0496">
    <property type="entry name" value="JQ0496"/>
</dbReference>
<dbReference type="SMR" id="P19723"/>
<dbReference type="GO" id="GO:0019028">
    <property type="term" value="C:viral capsid"/>
    <property type="evidence" value="ECO:0007669"/>
    <property type="project" value="UniProtKB-KW"/>
</dbReference>
<dbReference type="GO" id="GO:0000166">
    <property type="term" value="F:nucleotide binding"/>
    <property type="evidence" value="ECO:0007669"/>
    <property type="project" value="UniProtKB-KW"/>
</dbReference>
<dbReference type="GO" id="GO:0003723">
    <property type="term" value="F:RNA binding"/>
    <property type="evidence" value="ECO:0007669"/>
    <property type="project" value="InterPro"/>
</dbReference>
<dbReference type="GO" id="GO:0003968">
    <property type="term" value="F:RNA-directed RNA polymerase activity"/>
    <property type="evidence" value="ECO:0007669"/>
    <property type="project" value="UniProtKB-KW"/>
</dbReference>
<dbReference type="GO" id="GO:0006351">
    <property type="term" value="P:DNA-templated transcription"/>
    <property type="evidence" value="ECO:0007669"/>
    <property type="project" value="InterPro"/>
</dbReference>
<dbReference type="GO" id="GO:0039694">
    <property type="term" value="P:viral RNA genome replication"/>
    <property type="evidence" value="ECO:0007669"/>
    <property type="project" value="InterPro"/>
</dbReference>
<dbReference type="CDD" id="cd23175">
    <property type="entry name" value="ps-ssRNAv_Potyviridae_RdRp"/>
    <property type="match status" value="1"/>
</dbReference>
<dbReference type="Gene3D" id="3.30.70.270">
    <property type="match status" value="1"/>
</dbReference>
<dbReference type="InterPro" id="IPR043502">
    <property type="entry name" value="DNA/RNA_pol_sf"/>
</dbReference>
<dbReference type="InterPro" id="IPR001592">
    <property type="entry name" value="Poty_coat"/>
</dbReference>
<dbReference type="InterPro" id="IPR043128">
    <property type="entry name" value="Rev_trsase/Diguanyl_cyclase"/>
</dbReference>
<dbReference type="InterPro" id="IPR001205">
    <property type="entry name" value="RNA-dir_pol_C"/>
</dbReference>
<dbReference type="InterPro" id="IPR007094">
    <property type="entry name" value="RNA-dir_pol_PSvirus"/>
</dbReference>
<dbReference type="Pfam" id="PF00767">
    <property type="entry name" value="Poty_coat"/>
    <property type="match status" value="1"/>
</dbReference>
<dbReference type="Pfam" id="PF00680">
    <property type="entry name" value="RdRP_1"/>
    <property type="match status" value="1"/>
</dbReference>
<dbReference type="SUPFAM" id="SSF56672">
    <property type="entry name" value="DNA/RNA polymerases"/>
    <property type="match status" value="1"/>
</dbReference>
<dbReference type="PROSITE" id="PS50507">
    <property type="entry name" value="RDRP_SSRNA_POS"/>
    <property type="match status" value="1"/>
</dbReference>
<keyword id="KW-0167">Capsid protein</keyword>
<keyword id="KW-0547">Nucleotide-binding</keyword>
<keyword id="KW-0548">Nucleotidyltransferase</keyword>
<keyword id="KW-0696">RNA-directed RNA polymerase</keyword>
<keyword id="KW-0808">Transferase</keyword>
<keyword id="KW-0693">Viral RNA replication</keyword>
<keyword id="KW-0946">Virion</keyword>
<protein>
    <recommendedName>
        <fullName>Genome polyprotein</fullName>
    </recommendedName>
    <component>
        <recommendedName>
            <fullName>Nuclear inclusion protein B</fullName>
            <shortName>NI-B</shortName>
            <shortName>NIB</shortName>
        </recommendedName>
        <alternativeName>
            <fullName>RNA-directed RNA polymerase</fullName>
            <ecNumber>2.7.7.48</ecNumber>
        </alternativeName>
    </component>
    <component>
        <recommendedName>
            <fullName>Capsid protein</fullName>
            <shortName>CP</shortName>
        </recommendedName>
        <alternativeName>
            <fullName>Coat protein</fullName>
        </alternativeName>
    </component>
</protein>
<organismHost>
    <name type="scientific">Carica papaya</name>
    <name type="common">Papaya</name>
    <dbReference type="NCBI Taxonomy" id="3649"/>
</organismHost>
<reference key="1">
    <citation type="journal article" date="1990" name="J. Gen. Virol.">
        <title>The nucleotide sequences of the 3'-terminal regions of papaya ringspot virus strains W and P.</title>
        <authorList>
            <person name="Quemada H."/>
            <person name="L'Hostis B."/>
            <person name="Gonsalves D."/>
            <person name="Reardon I.M."/>
            <person name="Heinrikson R."/>
            <person name="Hiebert E.L."/>
            <person name="Sieu L.C."/>
            <person name="Slightom J.L."/>
        </authorList>
    </citation>
    <scope>NUCLEOTIDE SEQUENCE [GENOMIC RNA]</scope>
</reference>
<reference key="2">
    <citation type="journal article" date="2001" name="Virus Res.">
        <title>Potyvirus proteins: a wealth of functions.</title>
        <authorList>
            <person name="Urcuqui-Inchima S."/>
            <person name="Haenni A.L."/>
            <person name="Bernardi F."/>
        </authorList>
    </citation>
    <scope>REVIEW</scope>
</reference>
<name>POLG_PRSVP</name>
<accession>P19723</accession>
<proteinExistence type="inferred from homology"/>